<name>YACG_PSEP1</name>
<comment type="function">
    <text evidence="1">Inhibits all the catalytic activities of DNA gyrase by preventing its interaction with DNA. Acts by binding directly to the C-terminal domain of GyrB, which probably disrupts DNA binding by the gyrase.</text>
</comment>
<comment type="cofactor">
    <cofactor evidence="1">
        <name>Zn(2+)</name>
        <dbReference type="ChEBI" id="CHEBI:29105"/>
    </cofactor>
    <text evidence="1">Binds 1 zinc ion.</text>
</comment>
<comment type="subunit">
    <text evidence="1">Interacts with GyrB.</text>
</comment>
<comment type="similarity">
    <text evidence="1">Belongs to the DNA gyrase inhibitor YacG family.</text>
</comment>
<proteinExistence type="inferred from homology"/>
<reference key="1">
    <citation type="submission" date="2007-05" db="EMBL/GenBank/DDBJ databases">
        <title>Complete sequence of Pseudomonas putida F1.</title>
        <authorList>
            <consortium name="US DOE Joint Genome Institute"/>
            <person name="Copeland A."/>
            <person name="Lucas S."/>
            <person name="Lapidus A."/>
            <person name="Barry K."/>
            <person name="Detter J.C."/>
            <person name="Glavina del Rio T."/>
            <person name="Hammon N."/>
            <person name="Israni S."/>
            <person name="Dalin E."/>
            <person name="Tice H."/>
            <person name="Pitluck S."/>
            <person name="Chain P."/>
            <person name="Malfatti S."/>
            <person name="Shin M."/>
            <person name="Vergez L."/>
            <person name="Schmutz J."/>
            <person name="Larimer F."/>
            <person name="Land M."/>
            <person name="Hauser L."/>
            <person name="Kyrpides N."/>
            <person name="Lykidis A."/>
            <person name="Parales R."/>
            <person name="Richardson P."/>
        </authorList>
    </citation>
    <scope>NUCLEOTIDE SEQUENCE [LARGE SCALE GENOMIC DNA]</scope>
    <source>
        <strain>ATCC 700007 / DSM 6899 / JCM 31910 / BCRC 17059 / LMG 24140 / F1</strain>
    </source>
</reference>
<gene>
    <name evidence="1" type="primary">yacG</name>
    <name type="ordered locus">Pput_0671</name>
</gene>
<evidence type="ECO:0000255" key="1">
    <source>
        <dbReference type="HAMAP-Rule" id="MF_00649"/>
    </source>
</evidence>
<evidence type="ECO:0000256" key="2">
    <source>
        <dbReference type="SAM" id="MobiDB-lite"/>
    </source>
</evidence>
<sequence>MSQPLTVDCPTCGAPVEWSEKNAFRPFCSDRCKLIDLGAWAAEEHKIAGSEGSEDELYSGDLEPRH</sequence>
<keyword id="KW-0479">Metal-binding</keyword>
<keyword id="KW-0862">Zinc</keyword>
<dbReference type="EMBL" id="CP000712">
    <property type="protein sequence ID" value="ABQ76839.1"/>
    <property type="molecule type" value="Genomic_DNA"/>
</dbReference>
<dbReference type="SMR" id="A5VY79"/>
<dbReference type="KEGG" id="ppf:Pput_0671"/>
<dbReference type="eggNOG" id="COG3024">
    <property type="taxonomic scope" value="Bacteria"/>
</dbReference>
<dbReference type="HOGENOM" id="CLU_178280_3_2_6"/>
<dbReference type="GO" id="GO:0008657">
    <property type="term" value="F:DNA topoisomerase type II (double strand cut, ATP-hydrolyzing) inhibitor activity"/>
    <property type="evidence" value="ECO:0007669"/>
    <property type="project" value="UniProtKB-UniRule"/>
</dbReference>
<dbReference type="GO" id="GO:0008270">
    <property type="term" value="F:zinc ion binding"/>
    <property type="evidence" value="ECO:0007669"/>
    <property type="project" value="UniProtKB-UniRule"/>
</dbReference>
<dbReference type="GO" id="GO:0006355">
    <property type="term" value="P:regulation of DNA-templated transcription"/>
    <property type="evidence" value="ECO:0007669"/>
    <property type="project" value="InterPro"/>
</dbReference>
<dbReference type="Gene3D" id="3.30.50.10">
    <property type="entry name" value="Erythroid Transcription Factor GATA-1, subunit A"/>
    <property type="match status" value="1"/>
</dbReference>
<dbReference type="HAMAP" id="MF_00649">
    <property type="entry name" value="DNA_gyrase_inhibitor_YacG"/>
    <property type="match status" value="1"/>
</dbReference>
<dbReference type="InterPro" id="IPR005584">
    <property type="entry name" value="DNA_gyrase_inhibitor_YacG"/>
</dbReference>
<dbReference type="InterPro" id="IPR013088">
    <property type="entry name" value="Znf_NHR/GATA"/>
</dbReference>
<dbReference type="NCBIfam" id="NF001638">
    <property type="entry name" value="PRK00418.1"/>
    <property type="match status" value="1"/>
</dbReference>
<dbReference type="PANTHER" id="PTHR36150">
    <property type="entry name" value="DNA GYRASE INHIBITOR YACG"/>
    <property type="match status" value="1"/>
</dbReference>
<dbReference type="PANTHER" id="PTHR36150:SF1">
    <property type="entry name" value="DNA GYRASE INHIBITOR YACG"/>
    <property type="match status" value="1"/>
</dbReference>
<dbReference type="Pfam" id="PF03884">
    <property type="entry name" value="YacG"/>
    <property type="match status" value="1"/>
</dbReference>
<dbReference type="SUPFAM" id="SSF57716">
    <property type="entry name" value="Glucocorticoid receptor-like (DNA-binding domain)"/>
    <property type="match status" value="1"/>
</dbReference>
<organism>
    <name type="scientific">Pseudomonas putida (strain ATCC 700007 / DSM 6899 / JCM 31910 / BCRC 17059 / LMG 24140 / F1)</name>
    <dbReference type="NCBI Taxonomy" id="351746"/>
    <lineage>
        <taxon>Bacteria</taxon>
        <taxon>Pseudomonadati</taxon>
        <taxon>Pseudomonadota</taxon>
        <taxon>Gammaproteobacteria</taxon>
        <taxon>Pseudomonadales</taxon>
        <taxon>Pseudomonadaceae</taxon>
        <taxon>Pseudomonas</taxon>
    </lineage>
</organism>
<accession>A5VY79</accession>
<protein>
    <recommendedName>
        <fullName evidence="1">DNA gyrase inhibitor YacG</fullName>
    </recommendedName>
</protein>
<feature type="chain" id="PRO_1000061469" description="DNA gyrase inhibitor YacG">
    <location>
        <begin position="1"/>
        <end position="66"/>
    </location>
</feature>
<feature type="region of interest" description="Disordered" evidence="2">
    <location>
        <begin position="45"/>
        <end position="66"/>
    </location>
</feature>
<feature type="binding site" evidence="1">
    <location>
        <position position="9"/>
    </location>
    <ligand>
        <name>Zn(2+)</name>
        <dbReference type="ChEBI" id="CHEBI:29105"/>
    </ligand>
</feature>
<feature type="binding site" evidence="1">
    <location>
        <position position="12"/>
    </location>
    <ligand>
        <name>Zn(2+)</name>
        <dbReference type="ChEBI" id="CHEBI:29105"/>
    </ligand>
</feature>
<feature type="binding site" evidence="1">
    <location>
        <position position="28"/>
    </location>
    <ligand>
        <name>Zn(2+)</name>
        <dbReference type="ChEBI" id="CHEBI:29105"/>
    </ligand>
</feature>
<feature type="binding site" evidence="1">
    <location>
        <position position="32"/>
    </location>
    <ligand>
        <name>Zn(2+)</name>
        <dbReference type="ChEBI" id="CHEBI:29105"/>
    </ligand>
</feature>